<organism>
    <name type="scientific">Escherichia coli O9:H4 (strain HS)</name>
    <dbReference type="NCBI Taxonomy" id="331112"/>
    <lineage>
        <taxon>Bacteria</taxon>
        <taxon>Pseudomonadati</taxon>
        <taxon>Pseudomonadota</taxon>
        <taxon>Gammaproteobacteria</taxon>
        <taxon>Enterobacterales</taxon>
        <taxon>Enterobacteriaceae</taxon>
        <taxon>Escherichia</taxon>
    </lineage>
</organism>
<dbReference type="EMBL" id="CP000802">
    <property type="protein sequence ID" value="ABV06064.1"/>
    <property type="molecule type" value="Genomic_DNA"/>
</dbReference>
<dbReference type="RefSeq" id="WP_001174962.1">
    <property type="nucleotide sequence ID" value="NC_009800.1"/>
</dbReference>
<dbReference type="SMR" id="A8A0L0"/>
<dbReference type="KEGG" id="ecx:EcHS_A1743"/>
<dbReference type="HOGENOM" id="CLU_012893_6_0_6"/>
<dbReference type="GO" id="GO:0005886">
    <property type="term" value="C:plasma membrane"/>
    <property type="evidence" value="ECO:0007669"/>
    <property type="project" value="UniProtKB-SubCell"/>
</dbReference>
<dbReference type="GO" id="GO:0015297">
    <property type="term" value="F:antiporter activity"/>
    <property type="evidence" value="ECO:0007669"/>
    <property type="project" value="UniProtKB-UniRule"/>
</dbReference>
<dbReference type="GO" id="GO:0042910">
    <property type="term" value="F:xenobiotic transmembrane transporter activity"/>
    <property type="evidence" value="ECO:0007669"/>
    <property type="project" value="UniProtKB-UniRule"/>
</dbReference>
<dbReference type="GO" id="GO:0006814">
    <property type="term" value="P:sodium ion transport"/>
    <property type="evidence" value="ECO:0007669"/>
    <property type="project" value="UniProtKB-UniRule"/>
</dbReference>
<dbReference type="GO" id="GO:0006855">
    <property type="term" value="P:xenobiotic transmembrane transport"/>
    <property type="evidence" value="ECO:0007669"/>
    <property type="project" value="UniProtKB-UniRule"/>
</dbReference>
<dbReference type="CDD" id="cd13131">
    <property type="entry name" value="MATE_NorM_like"/>
    <property type="match status" value="1"/>
</dbReference>
<dbReference type="HAMAP" id="MF_00400">
    <property type="entry name" value="MdtK"/>
    <property type="match status" value="1"/>
</dbReference>
<dbReference type="InterPro" id="IPR002528">
    <property type="entry name" value="MATE_fam"/>
</dbReference>
<dbReference type="InterPro" id="IPR050222">
    <property type="entry name" value="MATE_MdtK"/>
</dbReference>
<dbReference type="InterPro" id="IPR048279">
    <property type="entry name" value="MdtK-like"/>
</dbReference>
<dbReference type="InterPro" id="IPR022913">
    <property type="entry name" value="Multidrug-R_MdtK"/>
</dbReference>
<dbReference type="NCBIfam" id="TIGR00797">
    <property type="entry name" value="matE"/>
    <property type="match status" value="1"/>
</dbReference>
<dbReference type="PANTHER" id="PTHR43298:SF2">
    <property type="entry name" value="FMN_FAD EXPORTER YEEO-RELATED"/>
    <property type="match status" value="1"/>
</dbReference>
<dbReference type="PANTHER" id="PTHR43298">
    <property type="entry name" value="MULTIDRUG RESISTANCE PROTEIN NORM-RELATED"/>
    <property type="match status" value="1"/>
</dbReference>
<dbReference type="Pfam" id="PF01554">
    <property type="entry name" value="MatE"/>
    <property type="match status" value="2"/>
</dbReference>
<dbReference type="PIRSF" id="PIRSF006603">
    <property type="entry name" value="DinF"/>
    <property type="match status" value="1"/>
</dbReference>
<gene>
    <name evidence="1" type="primary">mdtK</name>
    <name type="ordered locus">EcHS_A1743</name>
</gene>
<accession>A8A0L0</accession>
<feature type="chain" id="PRO_1000060796" description="Multidrug resistance protein MdtK">
    <location>
        <begin position="1"/>
        <end position="457"/>
    </location>
</feature>
<feature type="transmembrane region" description="Helical" evidence="1">
    <location>
        <begin position="11"/>
        <end position="31"/>
    </location>
</feature>
<feature type="transmembrane region" description="Helical" evidence="1">
    <location>
        <begin position="53"/>
        <end position="73"/>
    </location>
</feature>
<feature type="transmembrane region" description="Helical" evidence="1">
    <location>
        <begin position="93"/>
        <end position="113"/>
    </location>
</feature>
<feature type="transmembrane region" description="Helical" evidence="1">
    <location>
        <begin position="127"/>
        <end position="147"/>
    </location>
</feature>
<feature type="transmembrane region" description="Helical" evidence="1">
    <location>
        <begin position="160"/>
        <end position="180"/>
    </location>
</feature>
<feature type="transmembrane region" description="Helical" evidence="1">
    <location>
        <begin position="189"/>
        <end position="209"/>
    </location>
</feature>
<feature type="transmembrane region" description="Helical" evidence="1">
    <location>
        <begin position="243"/>
        <end position="263"/>
    </location>
</feature>
<feature type="transmembrane region" description="Helical" evidence="1">
    <location>
        <begin position="276"/>
        <end position="296"/>
    </location>
</feature>
<feature type="transmembrane region" description="Helical" evidence="1">
    <location>
        <begin position="314"/>
        <end position="334"/>
    </location>
</feature>
<feature type="transmembrane region" description="Helical" evidence="1">
    <location>
        <begin position="350"/>
        <end position="370"/>
    </location>
</feature>
<feature type="transmembrane region" description="Helical" evidence="1">
    <location>
        <begin position="387"/>
        <end position="407"/>
    </location>
</feature>
<feature type="transmembrane region" description="Helical" evidence="1">
    <location>
        <begin position="418"/>
        <end position="438"/>
    </location>
</feature>
<protein>
    <recommendedName>
        <fullName evidence="1">Multidrug resistance protein MdtK</fullName>
    </recommendedName>
    <alternativeName>
        <fullName evidence="1">Multidrug-efflux transporter</fullName>
    </alternativeName>
</protein>
<comment type="function">
    <text evidence="1">Multidrug efflux pump that functions probably as a Na(+)/drug antiporter.</text>
</comment>
<comment type="subcellular location">
    <subcellularLocation>
        <location evidence="1">Cell inner membrane</location>
        <topology evidence="1">Multi-pass membrane protein</topology>
    </subcellularLocation>
</comment>
<comment type="similarity">
    <text evidence="1">Belongs to the multi antimicrobial extrusion (MATE) (TC 2.A.66.1) family. MdtK subfamily.</text>
</comment>
<evidence type="ECO:0000255" key="1">
    <source>
        <dbReference type="HAMAP-Rule" id="MF_00400"/>
    </source>
</evidence>
<name>MDTK_ECOHS</name>
<sequence length="457" mass="49479">MQKYISEARLLLALAIPVILAQIAQTAMGFVDTVMAGGYSATDMAAVAIGTSIWLPAILFGHGLLLALTPVIAQLNGSGRRERIAHQVRQGFWLAGFVSVLIMLVLWNAGYIIRSMENIDPALAEKAVGYLRALLWGAPGYLFFQVARNQCEGLAKTKPGMVMGFIGLLVNIPVNYIFIYGHFGMPELGGVGCGVATAAVYWVMFLAMVSYIKRARSMRDIRNEKGTAKPDPAVMKRLIQLGLPIALALFFEVTLFAVVALLVSPLGIVDVAGHQIALNFSSLMFVLPMSLAAAVTIRVGYRLGQGSTLDAQTAARTGLMVGVCMATLTAIFTVSLREQIALLYNDNPEVVTLAAHLMLLAAVYQISDSIQVIGSGILRGYKDTRSIFYITFTAYWVLGLPSGYILALTDLVVEPMGPAGFWIGFIIGLTSAAIMMMLRMRFLQRMPSAIILQRASR</sequence>
<reference key="1">
    <citation type="journal article" date="2008" name="J. Bacteriol.">
        <title>The pangenome structure of Escherichia coli: comparative genomic analysis of E. coli commensal and pathogenic isolates.</title>
        <authorList>
            <person name="Rasko D.A."/>
            <person name="Rosovitz M.J."/>
            <person name="Myers G.S.A."/>
            <person name="Mongodin E.F."/>
            <person name="Fricke W.F."/>
            <person name="Gajer P."/>
            <person name="Crabtree J."/>
            <person name="Sebaihia M."/>
            <person name="Thomson N.R."/>
            <person name="Chaudhuri R."/>
            <person name="Henderson I.R."/>
            <person name="Sperandio V."/>
            <person name="Ravel J."/>
        </authorList>
    </citation>
    <scope>NUCLEOTIDE SEQUENCE [LARGE SCALE GENOMIC DNA]</scope>
    <source>
        <strain>HS</strain>
    </source>
</reference>
<proteinExistence type="inferred from homology"/>
<keyword id="KW-0050">Antiport</keyword>
<keyword id="KW-0997">Cell inner membrane</keyword>
<keyword id="KW-1003">Cell membrane</keyword>
<keyword id="KW-0406">Ion transport</keyword>
<keyword id="KW-0472">Membrane</keyword>
<keyword id="KW-0915">Sodium</keyword>
<keyword id="KW-0739">Sodium transport</keyword>
<keyword id="KW-0812">Transmembrane</keyword>
<keyword id="KW-1133">Transmembrane helix</keyword>
<keyword id="KW-0813">Transport</keyword>